<reference key="1">
    <citation type="journal article" date="2010" name="Genome Biol. Evol.">
        <title>Continuing evolution of Burkholderia mallei through genome reduction and large-scale rearrangements.</title>
        <authorList>
            <person name="Losada L."/>
            <person name="Ronning C.M."/>
            <person name="DeShazer D."/>
            <person name="Woods D."/>
            <person name="Fedorova N."/>
            <person name="Kim H.S."/>
            <person name="Shabalina S.A."/>
            <person name="Pearson T.R."/>
            <person name="Brinkac L."/>
            <person name="Tan P."/>
            <person name="Nandi T."/>
            <person name="Crabtree J."/>
            <person name="Badger J."/>
            <person name="Beckstrom-Sternberg S."/>
            <person name="Saqib M."/>
            <person name="Schutzer S.E."/>
            <person name="Keim P."/>
            <person name="Nierman W.C."/>
        </authorList>
    </citation>
    <scope>NUCLEOTIDE SEQUENCE [LARGE SCALE GENOMIC DNA]</scope>
    <source>
        <strain>668</strain>
    </source>
</reference>
<organism>
    <name type="scientific">Burkholderia pseudomallei (strain 668)</name>
    <dbReference type="NCBI Taxonomy" id="320373"/>
    <lineage>
        <taxon>Bacteria</taxon>
        <taxon>Pseudomonadati</taxon>
        <taxon>Pseudomonadota</taxon>
        <taxon>Betaproteobacteria</taxon>
        <taxon>Burkholderiales</taxon>
        <taxon>Burkholderiaceae</taxon>
        <taxon>Burkholderia</taxon>
        <taxon>pseudomallei group</taxon>
    </lineage>
</organism>
<accession>A3NDT0</accession>
<dbReference type="EMBL" id="CP000570">
    <property type="protein sequence ID" value="ABN82042.1"/>
    <property type="molecule type" value="Genomic_DNA"/>
</dbReference>
<dbReference type="RefSeq" id="WP_004194344.1">
    <property type="nucleotide sequence ID" value="NC_009074.1"/>
</dbReference>
<dbReference type="SMR" id="A3NDT0"/>
<dbReference type="GeneID" id="93061605"/>
<dbReference type="KEGG" id="bpd:BURPS668_3490"/>
<dbReference type="HOGENOM" id="CLU_061463_3_1_4"/>
<dbReference type="GO" id="GO:0005737">
    <property type="term" value="C:cytoplasm"/>
    <property type="evidence" value="ECO:0007669"/>
    <property type="project" value="UniProtKB-ARBA"/>
</dbReference>
<dbReference type="GO" id="GO:1990904">
    <property type="term" value="C:ribonucleoprotein complex"/>
    <property type="evidence" value="ECO:0007669"/>
    <property type="project" value="UniProtKB-KW"/>
</dbReference>
<dbReference type="GO" id="GO:0005840">
    <property type="term" value="C:ribosome"/>
    <property type="evidence" value="ECO:0007669"/>
    <property type="project" value="UniProtKB-KW"/>
</dbReference>
<dbReference type="GO" id="GO:0019843">
    <property type="term" value="F:rRNA binding"/>
    <property type="evidence" value="ECO:0007669"/>
    <property type="project" value="UniProtKB-UniRule"/>
</dbReference>
<dbReference type="GO" id="GO:0003735">
    <property type="term" value="F:structural constituent of ribosome"/>
    <property type="evidence" value="ECO:0007669"/>
    <property type="project" value="InterPro"/>
</dbReference>
<dbReference type="GO" id="GO:0006412">
    <property type="term" value="P:translation"/>
    <property type="evidence" value="ECO:0007669"/>
    <property type="project" value="UniProtKB-UniRule"/>
</dbReference>
<dbReference type="HAMAP" id="MF_01363">
    <property type="entry name" value="Ribosomal_bL21"/>
    <property type="match status" value="1"/>
</dbReference>
<dbReference type="InterPro" id="IPR028909">
    <property type="entry name" value="bL21-like"/>
</dbReference>
<dbReference type="InterPro" id="IPR036164">
    <property type="entry name" value="bL21-like_sf"/>
</dbReference>
<dbReference type="InterPro" id="IPR001787">
    <property type="entry name" value="Ribosomal_bL21"/>
</dbReference>
<dbReference type="InterPro" id="IPR018258">
    <property type="entry name" value="Ribosomal_bL21_CS"/>
</dbReference>
<dbReference type="NCBIfam" id="TIGR00061">
    <property type="entry name" value="L21"/>
    <property type="match status" value="1"/>
</dbReference>
<dbReference type="PANTHER" id="PTHR21349">
    <property type="entry name" value="50S RIBOSOMAL PROTEIN L21"/>
    <property type="match status" value="1"/>
</dbReference>
<dbReference type="PANTHER" id="PTHR21349:SF0">
    <property type="entry name" value="LARGE RIBOSOMAL SUBUNIT PROTEIN BL21M"/>
    <property type="match status" value="1"/>
</dbReference>
<dbReference type="Pfam" id="PF00829">
    <property type="entry name" value="Ribosomal_L21p"/>
    <property type="match status" value="1"/>
</dbReference>
<dbReference type="SUPFAM" id="SSF141091">
    <property type="entry name" value="L21p-like"/>
    <property type="match status" value="1"/>
</dbReference>
<dbReference type="PROSITE" id="PS01169">
    <property type="entry name" value="RIBOSOMAL_L21"/>
    <property type="match status" value="1"/>
</dbReference>
<feature type="chain" id="PRO_1000067815" description="Large ribosomal subunit protein bL21">
    <location>
        <begin position="1"/>
        <end position="103"/>
    </location>
</feature>
<evidence type="ECO:0000255" key="1">
    <source>
        <dbReference type="HAMAP-Rule" id="MF_01363"/>
    </source>
</evidence>
<evidence type="ECO:0000305" key="2"/>
<keyword id="KW-0687">Ribonucleoprotein</keyword>
<keyword id="KW-0689">Ribosomal protein</keyword>
<keyword id="KW-0694">RNA-binding</keyword>
<keyword id="KW-0699">rRNA-binding</keyword>
<name>RL21_BURP6</name>
<comment type="function">
    <text evidence="1">This protein binds to 23S rRNA in the presence of protein L20.</text>
</comment>
<comment type="subunit">
    <text evidence="1">Part of the 50S ribosomal subunit. Contacts protein L20.</text>
</comment>
<comment type="similarity">
    <text evidence="1">Belongs to the bacterial ribosomal protein bL21 family.</text>
</comment>
<gene>
    <name evidence="1" type="primary">rplU</name>
    <name type="ordered locus">BURPS668_3490</name>
</gene>
<proteinExistence type="inferred from homology"/>
<protein>
    <recommendedName>
        <fullName evidence="1">Large ribosomal subunit protein bL21</fullName>
    </recommendedName>
    <alternativeName>
        <fullName evidence="2">50S ribosomal protein L21</fullName>
    </alternativeName>
</protein>
<sequence length="103" mass="11356">MYAVIKTGGKQYKVAVGEKLKVEQIPADIDAEITLDQVLAVGEGESIQFGTPLVSGASVKATVVSHGRHAKVTIFKMRRRKHYQKHGGHRQNYTELRIDAINA</sequence>